<dbReference type="EMBL" id="HG764169">
    <property type="protein sequence ID" value="CDJ79776.1"/>
    <property type="molecule type" value="Genomic_DNA"/>
</dbReference>
<dbReference type="EMBL" id="AL592312">
    <property type="protein sequence ID" value="CAC42898.1"/>
    <property type="status" value="ALT_SEQ"/>
    <property type="molecule type" value="Genomic_DNA"/>
</dbReference>
<dbReference type="EMBL" id="CP002688">
    <property type="protein sequence ID" value="AED91800.1"/>
    <property type="molecule type" value="Genomic_DNA"/>
</dbReference>
<dbReference type="EMBL" id="CP002688">
    <property type="protein sequence ID" value="AED91801.1"/>
    <property type="molecule type" value="Genomic_DNA"/>
</dbReference>
<dbReference type="EMBL" id="AK222187">
    <property type="protein sequence ID" value="BAD95324.1"/>
    <property type="molecule type" value="mRNA"/>
</dbReference>
<dbReference type="RefSeq" id="NP_001031871.1">
    <molecule id="X5JA13-1"/>
    <property type="nucleotide sequence ID" value="NM_001036794.2"/>
</dbReference>
<dbReference type="RefSeq" id="NP_568270.3">
    <molecule id="X5JA13-1"/>
    <property type="nucleotide sequence ID" value="NM_121275.4"/>
</dbReference>
<dbReference type="SMR" id="X5JA13"/>
<dbReference type="FunCoup" id="X5JA13">
    <property type="interactions" value="4917"/>
</dbReference>
<dbReference type="STRING" id="3702.X5JA13"/>
<dbReference type="GlyGen" id="X5JA13">
    <property type="glycosylation" value="1 site"/>
</dbReference>
<dbReference type="iPTMnet" id="X5JA13"/>
<dbReference type="PaxDb" id="3702-AT5G12370.2"/>
<dbReference type="EnsemblPlants" id="AT5G12370.1">
    <molecule id="X5JA13-1"/>
    <property type="protein sequence ID" value="AT5G12370.1"/>
    <property type="gene ID" value="AT5G12370"/>
</dbReference>
<dbReference type="EnsemblPlants" id="AT5G12370.2">
    <molecule id="X5JA13-1"/>
    <property type="protein sequence ID" value="AT5G12370.2"/>
    <property type="gene ID" value="AT5G12370"/>
</dbReference>
<dbReference type="Gramene" id="AT5G12370.1">
    <molecule id="X5JA13-1"/>
    <property type="protein sequence ID" value="AT5G12370.1"/>
    <property type="gene ID" value="AT5G12370"/>
</dbReference>
<dbReference type="Gramene" id="AT5G12370.2">
    <molecule id="X5JA13-1"/>
    <property type="protein sequence ID" value="AT5G12370.2"/>
    <property type="gene ID" value="AT5G12370"/>
</dbReference>
<dbReference type="KEGG" id="ath:AT5G12370"/>
<dbReference type="Araport" id="AT5G12370"/>
<dbReference type="TAIR" id="AT5G12370">
    <property type="gene designation" value="SEC10"/>
</dbReference>
<dbReference type="eggNOG" id="KOG3745">
    <property type="taxonomic scope" value="Eukaryota"/>
</dbReference>
<dbReference type="HOGENOM" id="CLU_020771_0_0_1"/>
<dbReference type="InParanoid" id="X5JA13"/>
<dbReference type="OMA" id="PLCKHHY"/>
<dbReference type="PhylomeDB" id="X5JA13"/>
<dbReference type="PRO" id="PR:X5JA13"/>
<dbReference type="Proteomes" id="UP000006548">
    <property type="component" value="Chromosome 5"/>
</dbReference>
<dbReference type="ExpressionAtlas" id="X5JA13">
    <property type="expression patterns" value="baseline and differential"/>
</dbReference>
<dbReference type="GO" id="GO:0005829">
    <property type="term" value="C:cytosol"/>
    <property type="evidence" value="ECO:0000314"/>
    <property type="project" value="UniProtKB"/>
</dbReference>
<dbReference type="GO" id="GO:0070062">
    <property type="term" value="C:extracellular exosome"/>
    <property type="evidence" value="ECO:0000314"/>
    <property type="project" value="UniProtKB"/>
</dbReference>
<dbReference type="GO" id="GO:0006887">
    <property type="term" value="P:exocytosis"/>
    <property type="evidence" value="ECO:0007669"/>
    <property type="project" value="UniProtKB-KW"/>
</dbReference>
<dbReference type="Gene3D" id="1.20.58.1970">
    <property type="match status" value="1"/>
</dbReference>
<dbReference type="InterPro" id="IPR009976">
    <property type="entry name" value="Sec10-like"/>
</dbReference>
<dbReference type="InterPro" id="IPR048627">
    <property type="entry name" value="Sec10_HB"/>
</dbReference>
<dbReference type="InterPro" id="IPR048625">
    <property type="entry name" value="Sec10_N"/>
</dbReference>
<dbReference type="PANTHER" id="PTHR12100:SF0">
    <property type="entry name" value="EXOCYST COMPLEX COMPONENT 5"/>
    <property type="match status" value="1"/>
</dbReference>
<dbReference type="PANTHER" id="PTHR12100">
    <property type="entry name" value="SEC10"/>
    <property type="match status" value="1"/>
</dbReference>
<dbReference type="Pfam" id="PF07393">
    <property type="entry name" value="Sec10_HB"/>
    <property type="match status" value="2"/>
</dbReference>
<dbReference type="Pfam" id="PF20667">
    <property type="entry name" value="Sec10_N"/>
    <property type="match status" value="1"/>
</dbReference>
<evidence type="ECO:0000255" key="1"/>
<evidence type="ECO:0000269" key="2">
    <source>
    </source>
</evidence>
<evidence type="ECO:0000269" key="3">
    <source>
    </source>
</evidence>
<evidence type="ECO:0000269" key="4">
    <source>
    </source>
</evidence>
<evidence type="ECO:0000269" key="5">
    <source>
    </source>
</evidence>
<evidence type="ECO:0000269" key="6">
    <source>
    </source>
</evidence>
<evidence type="ECO:0000303" key="7">
    <source>
    </source>
</evidence>
<evidence type="ECO:0000305" key="8"/>
<evidence type="ECO:0000305" key="9">
    <source>
    </source>
</evidence>
<evidence type="ECO:0000312" key="10">
    <source>
        <dbReference type="Araport" id="AT5G12370"/>
    </source>
</evidence>
<evidence type="ECO:0000312" key="11">
    <source>
        <dbReference type="EMBL" id="CAC42898.1"/>
    </source>
</evidence>
<feature type="chain" id="PRO_0000118948" description="Exocyst complex component SEC10a">
    <location>
        <begin position="1"/>
        <end position="825"/>
    </location>
</feature>
<feature type="coiled-coil region" evidence="1">
    <location>
        <begin position="244"/>
        <end position="266"/>
    </location>
</feature>
<comment type="function">
    <text evidence="2 3">Component of the exocyst complex involved in the docking of exocytic vesicles with fusion sites on the plasma membrane during regulated or polarized secretion. Involved in polarized cell growth and organ morphogenesis. During cytokinesis, involved in cell plate initiation, cell plate maturation and formation of new primary cell wall.</text>
</comment>
<comment type="subunit">
    <text evidence="2 4 6">The exocyst complex is composed of SEC3, SEC5, SEC6, SEC8, SEC10, EXO70A1 and EXO84B. Interacts with EXO84B. Binds to EXO70E2 (PubMed:24307681). Binds directly to B1L (PubMed:35249253).</text>
</comment>
<comment type="subcellular location">
    <subcellularLocation>
        <location evidence="4">Cytoplasm</location>
        <location evidence="4">Cytosol</location>
    </subcellularLocation>
    <subcellularLocation>
        <location evidence="4">Secreted</location>
        <location evidence="4">Extracellular exosome</location>
    </subcellularLocation>
    <text evidence="4">Shuttles from the cytoplasm to the exocyst-positive organelle (EXPO) in the presence of EXO70E2.</text>
</comment>
<comment type="alternative products">
    <event type="alternative splicing"/>
    <isoform>
        <id>X5JA13-1</id>
        <name>1</name>
        <sequence type="displayed"/>
    </isoform>
    <text>A number of isoforms are produced. According to EST sequences.</text>
</comment>
<comment type="tissue specificity">
    <text evidence="5">Expressed in seedlings, roots, leaves and flowers.</text>
</comment>
<comment type="disruption phenotype">
    <text evidence="5">No visible phenotype, due to the redundancy with SEC10b.</text>
</comment>
<comment type="similarity">
    <text evidence="8">Belongs to the SEC10 family.</text>
</comment>
<comment type="caution">
    <text evidence="9">This locus, comprising the single gene At5g12370 in the original reference genome assembly, contains in fact two paralogous genes in tandem, SEC10a (At5g12370) and SEC10b (At5g12365), and a sequence segment of 7 kb in length is missing from the reference genome sequence.</text>
</comment>
<comment type="sequence caution" evidence="8">
    <conflict type="erroneous gene model prediction">
        <sequence resource="EMBL-CDS" id="CAC42898"/>
    </conflict>
</comment>
<name>SECAA_ARATH</name>
<sequence length="825" mass="89694">MTEGIRARGPRSSSVNSVPLILDIEDFKGDFSFDALFGNLVNDLLPSFLDEEADSGDGHGNIAGVDGLTNGHLRGQSAPLSSAPFFPEVDGLLSLFKDACKELVDLRKQVDGRLNTLKKEVSTQDSKHRKTLTEIEKGVDGLFESFARLDGRISSVGQTAAKIGDHLQSADAQRETASQTIDLIKYLMEFNGSPGDLMELSALFSDDSRVAEAASIAQKLRSFAEEDIGRQGASAAAGNATPGRGLEVAVANLQDYCNELENRLLSRFDAASQRRDLSTMSECAKILSQFNRGTSAMQHYVATRPMFIDVEVMNSDIRLVLGDHGSQPSPSNVARGLSALFKEITDTVRKEAATITAVFPTPNEVMAILVQRVLEQRVTGILDKILAKPSLMSPPPVQEGGLLLYLRMLAVAYERTQELAKDLRAVGCGDLDVEDLTESLFSSHKDEYPEHERASLKQLYQAKMEELRAESQQVSESSGTIGRSKGASISSSLQQISVTVVTDFVRWNEEAITRCTLFSSQPATLAANVKAIFTCLLDQVSVYITEGLERARDSLSEAAALRERFVLGRRVAAAAASAAEAAAAAGESSFKSFMVAVQRCGSSVAIVQQYFANSISRLLLPVDGAHAASCEEMSTALSKAEAAAYKGLQQCIETVMAEVDRLLSSEQKSTDYRSTDDGIASDHRPTNACIRVVAYLSRVLESAFTALEGLNKQAFLTELGNRLEKLLLTHWQKFTFNPSGGLRLKRDLNEYVGFVKSFGAPSVDEKFELLGIIANVFIVAPDSLPTLFEGSPSIRKDAQRFIQLREDYKSAKLATKLSSLWPSLS</sequence>
<reference key="1">
    <citation type="journal article" date="2014" name="PLoS ONE">
        <title>Dissecting a hidden gene duplication: the Arabidopsis thaliana SEC10 locus.</title>
        <authorList>
            <person name="Vukasinovic N."/>
            <person name="Cvrckova F."/>
            <person name="Elias M."/>
            <person name="Cole R."/>
            <person name="Fowler J.E."/>
            <person name="Zarsky V."/>
            <person name="Synek L."/>
        </authorList>
    </citation>
    <scope>NUCLEOTIDE SEQUENCE [GENOMIC DNA]</scope>
    <scope>TISSUE SPECIFICITY</scope>
    <scope>DISRUPTION PHENOTYPE</scope>
</reference>
<reference key="2">
    <citation type="journal article" date="2000" name="Nature">
        <title>Sequence and analysis of chromosome 5 of the plant Arabidopsis thaliana.</title>
        <authorList>
            <person name="Tabata S."/>
            <person name="Kaneko T."/>
            <person name="Nakamura Y."/>
            <person name="Kotani H."/>
            <person name="Kato T."/>
            <person name="Asamizu E."/>
            <person name="Miyajima N."/>
            <person name="Sasamoto S."/>
            <person name="Kimura T."/>
            <person name="Hosouchi T."/>
            <person name="Kawashima K."/>
            <person name="Kohara M."/>
            <person name="Matsumoto M."/>
            <person name="Matsuno A."/>
            <person name="Muraki A."/>
            <person name="Nakayama S."/>
            <person name="Nakazaki N."/>
            <person name="Naruo K."/>
            <person name="Okumura S."/>
            <person name="Shinpo S."/>
            <person name="Takeuchi C."/>
            <person name="Wada T."/>
            <person name="Watanabe A."/>
            <person name="Yamada M."/>
            <person name="Yasuda M."/>
            <person name="Sato S."/>
            <person name="de la Bastide M."/>
            <person name="Huang E."/>
            <person name="Spiegel L."/>
            <person name="Gnoj L."/>
            <person name="O'Shaughnessy A."/>
            <person name="Preston R."/>
            <person name="Habermann K."/>
            <person name="Murray J."/>
            <person name="Johnson D."/>
            <person name="Rohlfing T."/>
            <person name="Nelson J."/>
            <person name="Stoneking T."/>
            <person name="Pepin K."/>
            <person name="Spieth J."/>
            <person name="Sekhon M."/>
            <person name="Armstrong J."/>
            <person name="Becker M."/>
            <person name="Belter E."/>
            <person name="Cordum H."/>
            <person name="Cordes M."/>
            <person name="Courtney L."/>
            <person name="Courtney W."/>
            <person name="Dante M."/>
            <person name="Du H."/>
            <person name="Edwards J."/>
            <person name="Fryman J."/>
            <person name="Haakensen B."/>
            <person name="Lamar E."/>
            <person name="Latreille P."/>
            <person name="Leonard S."/>
            <person name="Meyer R."/>
            <person name="Mulvaney E."/>
            <person name="Ozersky P."/>
            <person name="Riley A."/>
            <person name="Strowmatt C."/>
            <person name="Wagner-McPherson C."/>
            <person name="Wollam A."/>
            <person name="Yoakum M."/>
            <person name="Bell M."/>
            <person name="Dedhia N."/>
            <person name="Parnell L."/>
            <person name="Shah R."/>
            <person name="Rodriguez M."/>
            <person name="Hoon See L."/>
            <person name="Vil D."/>
            <person name="Baker J."/>
            <person name="Kirchoff K."/>
            <person name="Toth K."/>
            <person name="King L."/>
            <person name="Bahret A."/>
            <person name="Miller B."/>
            <person name="Marra M.A."/>
            <person name="Martienssen R."/>
            <person name="McCombie W.R."/>
            <person name="Wilson R.K."/>
            <person name="Murphy G."/>
            <person name="Bancroft I."/>
            <person name="Volckaert G."/>
            <person name="Wambutt R."/>
            <person name="Duesterhoeft A."/>
            <person name="Stiekema W."/>
            <person name="Pohl T."/>
            <person name="Entian K.-D."/>
            <person name="Terryn N."/>
            <person name="Hartley N."/>
            <person name="Bent E."/>
            <person name="Johnson S."/>
            <person name="Langham S.-A."/>
            <person name="McCullagh B."/>
            <person name="Robben J."/>
            <person name="Grymonprez B."/>
            <person name="Zimmermann W."/>
            <person name="Ramsperger U."/>
            <person name="Wedler H."/>
            <person name="Balke K."/>
            <person name="Wedler E."/>
            <person name="Peters S."/>
            <person name="van Staveren M."/>
            <person name="Dirkse W."/>
            <person name="Mooijman P."/>
            <person name="Klein Lankhorst R."/>
            <person name="Weitzenegger T."/>
            <person name="Bothe G."/>
            <person name="Rose M."/>
            <person name="Hauf J."/>
            <person name="Berneiser S."/>
            <person name="Hempel S."/>
            <person name="Feldpausch M."/>
            <person name="Lamberth S."/>
            <person name="Villarroel R."/>
            <person name="Gielen J."/>
            <person name="Ardiles W."/>
            <person name="Bents O."/>
            <person name="Lemcke K."/>
            <person name="Kolesov G."/>
            <person name="Mayer K.F.X."/>
            <person name="Rudd S."/>
            <person name="Schoof H."/>
            <person name="Schueller C."/>
            <person name="Zaccaria P."/>
            <person name="Mewes H.-W."/>
            <person name="Bevan M."/>
            <person name="Fransz P.F."/>
        </authorList>
    </citation>
    <scope>NUCLEOTIDE SEQUENCE [LARGE SCALE GENOMIC DNA]</scope>
    <source>
        <strain>cv. Columbia</strain>
    </source>
</reference>
<reference key="3">
    <citation type="journal article" date="2017" name="Plant J.">
        <title>Araport11: a complete reannotation of the Arabidopsis thaliana reference genome.</title>
        <authorList>
            <person name="Cheng C.Y."/>
            <person name="Krishnakumar V."/>
            <person name="Chan A.P."/>
            <person name="Thibaud-Nissen F."/>
            <person name="Schobel S."/>
            <person name="Town C.D."/>
        </authorList>
    </citation>
    <scope>GENOME REANNOTATION</scope>
    <source>
        <strain>cv. Columbia</strain>
    </source>
</reference>
<reference key="4">
    <citation type="submission" date="2005-03" db="EMBL/GenBank/DDBJ databases">
        <title>Large-scale analysis of RIKEN Arabidopsis full-length (RAFL) cDNAs.</title>
        <authorList>
            <person name="Totoki Y."/>
            <person name="Seki M."/>
            <person name="Ishida J."/>
            <person name="Nakajima M."/>
            <person name="Enju A."/>
            <person name="Kamiya A."/>
            <person name="Narusaka M."/>
            <person name="Shin-i T."/>
            <person name="Nakagawa M."/>
            <person name="Sakamoto N."/>
            <person name="Oishi K."/>
            <person name="Kohara Y."/>
            <person name="Kobayashi M."/>
            <person name="Toyoda A."/>
            <person name="Sakaki Y."/>
            <person name="Sakurai T."/>
            <person name="Iida K."/>
            <person name="Akiyama K."/>
            <person name="Satou M."/>
            <person name="Toyoda T."/>
            <person name="Konagaya A."/>
            <person name="Carninci P."/>
            <person name="Kawai J."/>
            <person name="Hayashizaki Y."/>
            <person name="Shinozaki K."/>
        </authorList>
    </citation>
    <scope>NUCLEOTIDE SEQUENCE [LARGE SCALE MRNA]</scope>
    <source>
        <strain>cv. Columbia</strain>
    </source>
</reference>
<reference key="5">
    <citation type="journal article" date="2008" name="Plant Cell">
        <title>An exocyst complex functions in plant cell growth in Arabidopsis and tobacco.</title>
        <authorList>
            <person name="Hala M."/>
            <person name="Cole R."/>
            <person name="Synek L."/>
            <person name="Drdova E."/>
            <person name="Pecenkova T."/>
            <person name="Nordheim A."/>
            <person name="Lamkemeyer T."/>
            <person name="Madlung J."/>
            <person name="Hochholdinger F."/>
            <person name="Fowler J.E."/>
            <person name="Zarsky V."/>
        </authorList>
    </citation>
    <scope>COMPONENT OF THE EXOCYST COMPLEX</scope>
</reference>
<reference key="6">
    <citation type="journal article" date="2010" name="New Phytol.">
        <title>Characterization of the Arabidopsis thaliana exocyst complex gene families by phylogenetic, expression profiling, and subcellular localization studies.</title>
        <authorList>
            <person name="Chong Y.T."/>
            <person name="Gidda S.K."/>
            <person name="Sanford C."/>
            <person name="Parkinson J."/>
            <person name="Mullen R.T."/>
            <person name="Goring D.R."/>
        </authorList>
    </citation>
    <scope>GENE FAMILY</scope>
    <scope>NOMENCLATURE</scope>
</reference>
<reference key="7">
    <citation type="journal article" date="2010" name="Plant Cell">
        <title>The Arabidopsis exocyst complex is involved in cytokinesis and cell plate maturation.</title>
        <authorList>
            <person name="Fendrych M."/>
            <person name="Synek L."/>
            <person name="Pecenkova T."/>
            <person name="Toupalova H."/>
            <person name="Cole R."/>
            <person name="Drdova E."/>
            <person name="Nebesarova J."/>
            <person name="Sedinova M."/>
            <person name="Hala M."/>
            <person name="Fowler J.E."/>
            <person name="Zarsky V."/>
        </authorList>
    </citation>
    <scope>FUNCTION</scope>
    <scope>INTERACTION WITH EXO84B</scope>
</reference>
<reference key="8">
    <citation type="journal article" date="2013" name="Plant J.">
        <title>The exocyst complex contributes to PIN auxin efflux carrier recycling and polar auxin transport in Arabidopsis.</title>
        <authorList>
            <person name="Drdova E.J."/>
            <person name="Synek L."/>
            <person name="Pecenkova T."/>
            <person name="Hala M."/>
            <person name="Kulich I."/>
            <person name="Fowler J.E."/>
            <person name="Murphy A.S."/>
            <person name="Zarsky V."/>
        </authorList>
    </citation>
    <scope>FUNCTION</scope>
</reference>
<reference key="9">
    <citation type="journal article" date="2014" name="Mol. Biol. Cell">
        <title>Exo70E2 is essential for exocyst subunit recruitment and EXPO formation in both plants and animals.</title>
        <authorList>
            <person name="Ding Y."/>
            <person name="Wang J."/>
            <person name="Chun Lai J.H."/>
            <person name="Ling Chan V.H."/>
            <person name="Wang X."/>
            <person name="Cai Y."/>
            <person name="Tan X."/>
            <person name="Bao Y."/>
            <person name="Xia J."/>
            <person name="Robinson D.G."/>
            <person name="Jiang L."/>
        </authorList>
    </citation>
    <scope>INTERACTION WITH EXO70E2</scope>
    <scope>SUBCELLULAR LOCATION</scope>
    <source>
        <strain>cv. Columbia</strain>
    </source>
</reference>
<reference key="10">
    <citation type="journal article" date="2022" name="J. Integr. Plant Biol.">
        <title>BYPASS1-LIKE regulates lateral root initiation via exocytic vesicular trafficking-mediated PIN recycling in Arabidopsis.</title>
        <authorList>
            <person name="Yang G."/>
            <person name="Chen B.-X."/>
            <person name="Chen T."/>
            <person name="Chen J.-H."/>
            <person name="Lin X.-Y."/>
            <person name="Yue X.-L."/>
            <person name="An L.-Z."/>
            <person name="Zhang H."/>
        </authorList>
    </citation>
    <scope>INTERACTION WITH B1L</scope>
    <source>
        <strain>cv. Columbia</strain>
    </source>
</reference>
<keyword id="KW-0025">Alternative splicing</keyword>
<keyword id="KW-0175">Coiled coil</keyword>
<keyword id="KW-0963">Cytoplasm</keyword>
<keyword id="KW-0268">Exocytosis</keyword>
<keyword id="KW-1185">Reference proteome</keyword>
<keyword id="KW-0964">Secreted</keyword>
<keyword id="KW-0813">Transport</keyword>
<proteinExistence type="evidence at protein level"/>
<protein>
    <recommendedName>
        <fullName evidence="7">Exocyst complex component SEC10a</fullName>
        <shortName evidence="7">AtSec10a</shortName>
    </recommendedName>
    <alternativeName>
        <fullName>Exocyst complex component 5</fullName>
    </alternativeName>
</protein>
<gene>
    <name evidence="7" type="primary">SEC10a</name>
    <name evidence="10" type="ordered locus">At5g12370</name>
    <name evidence="11" type="ORF">T2L20.2</name>
</gene>
<organism>
    <name type="scientific">Arabidopsis thaliana</name>
    <name type="common">Mouse-ear cress</name>
    <dbReference type="NCBI Taxonomy" id="3702"/>
    <lineage>
        <taxon>Eukaryota</taxon>
        <taxon>Viridiplantae</taxon>
        <taxon>Streptophyta</taxon>
        <taxon>Embryophyta</taxon>
        <taxon>Tracheophyta</taxon>
        <taxon>Spermatophyta</taxon>
        <taxon>Magnoliopsida</taxon>
        <taxon>eudicotyledons</taxon>
        <taxon>Gunneridae</taxon>
        <taxon>Pentapetalae</taxon>
        <taxon>rosids</taxon>
        <taxon>malvids</taxon>
        <taxon>Brassicales</taxon>
        <taxon>Brassicaceae</taxon>
        <taxon>Camelineae</taxon>
        <taxon>Arabidopsis</taxon>
    </lineage>
</organism>
<accession>X5JA13</accession>
<accession>Q56W60</accession>
<accession>Q8RVQ5</accession>
<accession>Q94CK5</accession>